<proteinExistence type="inferred from homology"/>
<sequence>MEKEKVLEIFEKLEVINKGHFLLSSGKHSDTYLQCAKIFQYPNYSEIFSRELAEKFKGYRIDVVIGPAIGGIILAYEVARQIGVRALFAEREDNVMKLRRGFEISKGERVLVVEDVVTTGGSVKEVIELVRSLGGEVIGVGTIVDRSDGKIDFGVPFESIVKLQIKTYEKEECPLCKEGIPLVKPGSRKL</sequence>
<comment type="function">
    <text evidence="1">Catalyzes the transfer of a ribosyl phosphate group from 5-phosphoribose 1-diphosphate to orotate, leading to the formation of orotidine monophosphate (OMP).</text>
</comment>
<comment type="catalytic activity">
    <reaction evidence="1">
        <text>orotidine 5'-phosphate + diphosphate = orotate + 5-phospho-alpha-D-ribose 1-diphosphate</text>
        <dbReference type="Rhea" id="RHEA:10380"/>
        <dbReference type="ChEBI" id="CHEBI:30839"/>
        <dbReference type="ChEBI" id="CHEBI:33019"/>
        <dbReference type="ChEBI" id="CHEBI:57538"/>
        <dbReference type="ChEBI" id="CHEBI:58017"/>
        <dbReference type="EC" id="2.4.2.10"/>
    </reaction>
</comment>
<comment type="cofactor">
    <cofactor evidence="1">
        <name>Mg(2+)</name>
        <dbReference type="ChEBI" id="CHEBI:18420"/>
    </cofactor>
</comment>
<comment type="pathway">
    <text evidence="1">Pyrimidine metabolism; UMP biosynthesis via de novo pathway; UMP from orotate: step 1/2.</text>
</comment>
<comment type="subunit">
    <text evidence="1">Homodimer.</text>
</comment>
<comment type="similarity">
    <text evidence="1">Belongs to the purine/pyrimidine phosphoribosyltransferase family. PyrE subfamily.</text>
</comment>
<accession>P58858</accession>
<feature type="chain" id="PRO_0000110762" description="Orotate phosphoribosyltransferase">
    <location>
        <begin position="1"/>
        <end position="190"/>
    </location>
</feature>
<feature type="binding site" evidence="1">
    <location>
        <begin position="114"/>
        <end position="122"/>
    </location>
    <ligand>
        <name>5-phospho-alpha-D-ribose 1-diphosphate</name>
        <dbReference type="ChEBI" id="CHEBI:58017"/>
    </ligand>
</feature>
<feature type="binding site" evidence="1">
    <location>
        <position position="118"/>
    </location>
    <ligand>
        <name>orotate</name>
        <dbReference type="ChEBI" id="CHEBI:30839"/>
    </ligand>
</feature>
<feature type="binding site" evidence="1">
    <location>
        <position position="146"/>
    </location>
    <ligand>
        <name>orotate</name>
        <dbReference type="ChEBI" id="CHEBI:30839"/>
    </ligand>
</feature>
<gene>
    <name evidence="1" type="primary">pyrE</name>
    <name type="ordered locus">TTE1529</name>
</gene>
<organism>
    <name type="scientific">Caldanaerobacter subterraneus subsp. tengcongensis (strain DSM 15242 / JCM 11007 / NBRC 100824 / MB4)</name>
    <name type="common">Thermoanaerobacter tengcongensis</name>
    <dbReference type="NCBI Taxonomy" id="273068"/>
    <lineage>
        <taxon>Bacteria</taxon>
        <taxon>Bacillati</taxon>
        <taxon>Bacillota</taxon>
        <taxon>Clostridia</taxon>
        <taxon>Thermoanaerobacterales</taxon>
        <taxon>Thermoanaerobacteraceae</taxon>
        <taxon>Caldanaerobacter</taxon>
    </lineage>
</organism>
<protein>
    <recommendedName>
        <fullName evidence="1">Orotate phosphoribosyltransferase</fullName>
        <shortName evidence="1">OPRT</shortName>
        <shortName evidence="1">OPRTase</shortName>
        <ecNumber evidence="1">2.4.2.10</ecNumber>
    </recommendedName>
</protein>
<name>PYRE_CALS4</name>
<keyword id="KW-0328">Glycosyltransferase</keyword>
<keyword id="KW-0460">Magnesium</keyword>
<keyword id="KW-0665">Pyrimidine biosynthesis</keyword>
<keyword id="KW-1185">Reference proteome</keyword>
<keyword id="KW-0808">Transferase</keyword>
<dbReference type="EC" id="2.4.2.10" evidence="1"/>
<dbReference type="EMBL" id="AE008691">
    <property type="protein sequence ID" value="AAM24740.1"/>
    <property type="molecule type" value="Genomic_DNA"/>
</dbReference>
<dbReference type="RefSeq" id="WP_009611302.1">
    <property type="nucleotide sequence ID" value="NC_003869.1"/>
</dbReference>
<dbReference type="SMR" id="P58858"/>
<dbReference type="STRING" id="273068.TTE1529"/>
<dbReference type="KEGG" id="tte:TTE1529"/>
<dbReference type="eggNOG" id="COG0461">
    <property type="taxonomic scope" value="Bacteria"/>
</dbReference>
<dbReference type="HOGENOM" id="CLU_074878_3_0_9"/>
<dbReference type="OrthoDB" id="9783570at2"/>
<dbReference type="UniPathway" id="UPA00070">
    <property type="reaction ID" value="UER00119"/>
</dbReference>
<dbReference type="Proteomes" id="UP000000555">
    <property type="component" value="Chromosome"/>
</dbReference>
<dbReference type="GO" id="GO:0000287">
    <property type="term" value="F:magnesium ion binding"/>
    <property type="evidence" value="ECO:0007669"/>
    <property type="project" value="UniProtKB-UniRule"/>
</dbReference>
<dbReference type="GO" id="GO:0004588">
    <property type="term" value="F:orotate phosphoribosyltransferase activity"/>
    <property type="evidence" value="ECO:0007669"/>
    <property type="project" value="UniProtKB-UniRule"/>
</dbReference>
<dbReference type="GO" id="GO:0044205">
    <property type="term" value="P:'de novo' UMP biosynthetic process"/>
    <property type="evidence" value="ECO:0007669"/>
    <property type="project" value="UniProtKB-UniRule"/>
</dbReference>
<dbReference type="GO" id="GO:0019856">
    <property type="term" value="P:pyrimidine nucleobase biosynthetic process"/>
    <property type="evidence" value="ECO:0007669"/>
    <property type="project" value="InterPro"/>
</dbReference>
<dbReference type="CDD" id="cd06223">
    <property type="entry name" value="PRTases_typeI"/>
    <property type="match status" value="1"/>
</dbReference>
<dbReference type="Gene3D" id="3.40.50.2020">
    <property type="match status" value="1"/>
</dbReference>
<dbReference type="HAMAP" id="MF_01208">
    <property type="entry name" value="PyrE"/>
    <property type="match status" value="1"/>
</dbReference>
<dbReference type="InterPro" id="IPR023031">
    <property type="entry name" value="OPRT"/>
</dbReference>
<dbReference type="InterPro" id="IPR006273">
    <property type="entry name" value="Orotate_PRibTrfase_bac"/>
</dbReference>
<dbReference type="InterPro" id="IPR000836">
    <property type="entry name" value="PRibTrfase_dom"/>
</dbReference>
<dbReference type="InterPro" id="IPR029057">
    <property type="entry name" value="PRTase-like"/>
</dbReference>
<dbReference type="NCBIfam" id="TIGR01367">
    <property type="entry name" value="pyrE_Therm"/>
    <property type="match status" value="1"/>
</dbReference>
<dbReference type="PANTHER" id="PTHR19278">
    <property type="entry name" value="OROTATE PHOSPHORIBOSYLTRANSFERASE"/>
    <property type="match status" value="1"/>
</dbReference>
<dbReference type="PANTHER" id="PTHR19278:SF9">
    <property type="entry name" value="URIDINE 5'-MONOPHOSPHATE SYNTHASE"/>
    <property type="match status" value="1"/>
</dbReference>
<dbReference type="Pfam" id="PF00156">
    <property type="entry name" value="Pribosyltran"/>
    <property type="match status" value="1"/>
</dbReference>
<dbReference type="SUPFAM" id="SSF53271">
    <property type="entry name" value="PRTase-like"/>
    <property type="match status" value="1"/>
</dbReference>
<dbReference type="PROSITE" id="PS00103">
    <property type="entry name" value="PUR_PYR_PR_TRANSFER"/>
    <property type="match status" value="1"/>
</dbReference>
<reference key="1">
    <citation type="journal article" date="2002" name="Genome Res.">
        <title>A complete sequence of the T. tengcongensis genome.</title>
        <authorList>
            <person name="Bao Q."/>
            <person name="Tian Y."/>
            <person name="Li W."/>
            <person name="Xu Z."/>
            <person name="Xuan Z."/>
            <person name="Hu S."/>
            <person name="Dong W."/>
            <person name="Yang J."/>
            <person name="Chen Y."/>
            <person name="Xue Y."/>
            <person name="Xu Y."/>
            <person name="Lai X."/>
            <person name="Huang L."/>
            <person name="Dong X."/>
            <person name="Ma Y."/>
            <person name="Ling L."/>
            <person name="Tan H."/>
            <person name="Chen R."/>
            <person name="Wang J."/>
            <person name="Yu J."/>
            <person name="Yang H."/>
        </authorList>
    </citation>
    <scope>NUCLEOTIDE SEQUENCE [LARGE SCALE GENOMIC DNA]</scope>
    <source>
        <strain>DSM 15242 / JCM 11007 / NBRC 100824 / MB4</strain>
    </source>
</reference>
<evidence type="ECO:0000255" key="1">
    <source>
        <dbReference type="HAMAP-Rule" id="MF_01208"/>
    </source>
</evidence>